<dbReference type="EC" id="2.3.1.275" evidence="1"/>
<dbReference type="EMBL" id="CP000090">
    <property type="protein sequence ID" value="AAZ59957.1"/>
    <property type="molecule type" value="Genomic_DNA"/>
</dbReference>
<dbReference type="SMR" id="Q475H6"/>
<dbReference type="STRING" id="264198.Reut_A0575"/>
<dbReference type="KEGG" id="reu:Reut_A0575"/>
<dbReference type="eggNOG" id="COG0344">
    <property type="taxonomic scope" value="Bacteria"/>
</dbReference>
<dbReference type="HOGENOM" id="CLU_081254_0_0_4"/>
<dbReference type="OrthoDB" id="9777124at2"/>
<dbReference type="UniPathway" id="UPA00085"/>
<dbReference type="GO" id="GO:0005886">
    <property type="term" value="C:plasma membrane"/>
    <property type="evidence" value="ECO:0007669"/>
    <property type="project" value="UniProtKB-SubCell"/>
</dbReference>
<dbReference type="GO" id="GO:0043772">
    <property type="term" value="F:acyl-phosphate glycerol-3-phosphate acyltransferase activity"/>
    <property type="evidence" value="ECO:0007669"/>
    <property type="project" value="UniProtKB-UniRule"/>
</dbReference>
<dbReference type="GO" id="GO:0008654">
    <property type="term" value="P:phospholipid biosynthetic process"/>
    <property type="evidence" value="ECO:0007669"/>
    <property type="project" value="UniProtKB-UniRule"/>
</dbReference>
<dbReference type="HAMAP" id="MF_01043">
    <property type="entry name" value="PlsY"/>
    <property type="match status" value="1"/>
</dbReference>
<dbReference type="InterPro" id="IPR003811">
    <property type="entry name" value="G3P_acylTferase_PlsY"/>
</dbReference>
<dbReference type="NCBIfam" id="TIGR00023">
    <property type="entry name" value="glycerol-3-phosphate 1-O-acyltransferase PlsY"/>
    <property type="match status" value="1"/>
</dbReference>
<dbReference type="PANTHER" id="PTHR30309:SF0">
    <property type="entry name" value="GLYCEROL-3-PHOSPHATE ACYLTRANSFERASE-RELATED"/>
    <property type="match status" value="1"/>
</dbReference>
<dbReference type="PANTHER" id="PTHR30309">
    <property type="entry name" value="INNER MEMBRANE PROTEIN YGIH"/>
    <property type="match status" value="1"/>
</dbReference>
<dbReference type="Pfam" id="PF02660">
    <property type="entry name" value="G3P_acyltransf"/>
    <property type="match status" value="1"/>
</dbReference>
<dbReference type="SMART" id="SM01207">
    <property type="entry name" value="G3P_acyltransf"/>
    <property type="match status" value="1"/>
</dbReference>
<proteinExistence type="inferred from homology"/>
<comment type="function">
    <text evidence="1">Catalyzes the transfer of an acyl group from acyl-phosphate (acyl-PO(4)) to glycerol-3-phosphate (G3P) to form lysophosphatidic acid (LPA). This enzyme utilizes acyl-phosphate as fatty acyl donor, but not acyl-CoA or acyl-ACP.</text>
</comment>
<comment type="catalytic activity">
    <reaction evidence="1">
        <text>an acyl phosphate + sn-glycerol 3-phosphate = a 1-acyl-sn-glycero-3-phosphate + phosphate</text>
        <dbReference type="Rhea" id="RHEA:34075"/>
        <dbReference type="ChEBI" id="CHEBI:43474"/>
        <dbReference type="ChEBI" id="CHEBI:57597"/>
        <dbReference type="ChEBI" id="CHEBI:57970"/>
        <dbReference type="ChEBI" id="CHEBI:59918"/>
        <dbReference type="EC" id="2.3.1.275"/>
    </reaction>
</comment>
<comment type="pathway">
    <text evidence="1">Lipid metabolism; phospholipid metabolism.</text>
</comment>
<comment type="subunit">
    <text evidence="1">Probably interacts with PlsX.</text>
</comment>
<comment type="subcellular location">
    <subcellularLocation>
        <location evidence="1">Cell inner membrane</location>
        <topology evidence="1">Multi-pass membrane protein</topology>
    </subcellularLocation>
</comment>
<comment type="similarity">
    <text evidence="1">Belongs to the PlsY family.</text>
</comment>
<accession>Q475H6</accession>
<protein>
    <recommendedName>
        <fullName evidence="1">Glycerol-3-phosphate acyltransferase</fullName>
    </recommendedName>
    <alternativeName>
        <fullName evidence="1">Acyl-PO4 G3P acyltransferase</fullName>
    </alternativeName>
    <alternativeName>
        <fullName evidence="1">Acyl-phosphate--glycerol-3-phosphate acyltransferase</fullName>
    </alternativeName>
    <alternativeName>
        <fullName evidence="1">G3P acyltransferase</fullName>
        <shortName evidence="1">GPAT</shortName>
        <ecNumber evidence="1">2.3.1.275</ecNumber>
    </alternativeName>
    <alternativeName>
        <fullName evidence="1">Lysophosphatidic acid synthase</fullName>
        <shortName evidence="1">LPA synthase</shortName>
    </alternativeName>
</protein>
<name>PLSY_CUPPJ</name>
<gene>
    <name evidence="1" type="primary">plsY</name>
    <name type="ordered locus">Reut_A0575</name>
</gene>
<sequence>MANLLFALAAYLIGSVSFAVVVSKVMGLPDPHTYGSGNPGATNVLRTGNKKAAIFTLIGDGLKGWLAVWLASRFGPAYGLDDNGLAMVALAVFLGHLFPVFHRFAGGKGVATAAGVLLAINPILGLATLATWVIIAFFFRYSSLAALVAAIFAPVFYVLMEGIDAMAGAVLIIAILLIARHRQNIAKLLTGKESRIGEKKKV</sequence>
<reference key="1">
    <citation type="journal article" date="2010" name="PLoS ONE">
        <title>The complete multipartite genome sequence of Cupriavidus necator JMP134, a versatile pollutant degrader.</title>
        <authorList>
            <person name="Lykidis A."/>
            <person name="Perez-Pantoja D."/>
            <person name="Ledger T."/>
            <person name="Mavromatis K."/>
            <person name="Anderson I.J."/>
            <person name="Ivanova N.N."/>
            <person name="Hooper S.D."/>
            <person name="Lapidus A."/>
            <person name="Lucas S."/>
            <person name="Gonzalez B."/>
            <person name="Kyrpides N.C."/>
        </authorList>
    </citation>
    <scope>NUCLEOTIDE SEQUENCE [LARGE SCALE GENOMIC DNA]</scope>
    <source>
        <strain>JMP134 / LMG 1197</strain>
    </source>
</reference>
<keyword id="KW-0997">Cell inner membrane</keyword>
<keyword id="KW-1003">Cell membrane</keyword>
<keyword id="KW-0444">Lipid biosynthesis</keyword>
<keyword id="KW-0443">Lipid metabolism</keyword>
<keyword id="KW-0472">Membrane</keyword>
<keyword id="KW-0594">Phospholipid biosynthesis</keyword>
<keyword id="KW-1208">Phospholipid metabolism</keyword>
<keyword id="KW-0808">Transferase</keyword>
<keyword id="KW-0812">Transmembrane</keyword>
<keyword id="KW-1133">Transmembrane helix</keyword>
<organism>
    <name type="scientific">Cupriavidus pinatubonensis (strain JMP 134 / LMG 1197)</name>
    <name type="common">Cupriavidus necator (strain JMP 134)</name>
    <dbReference type="NCBI Taxonomy" id="264198"/>
    <lineage>
        <taxon>Bacteria</taxon>
        <taxon>Pseudomonadati</taxon>
        <taxon>Pseudomonadota</taxon>
        <taxon>Betaproteobacteria</taxon>
        <taxon>Burkholderiales</taxon>
        <taxon>Burkholderiaceae</taxon>
        <taxon>Cupriavidus</taxon>
    </lineage>
</organism>
<feature type="chain" id="PRO_0000188434" description="Glycerol-3-phosphate acyltransferase">
    <location>
        <begin position="1"/>
        <end position="202"/>
    </location>
</feature>
<feature type="transmembrane region" description="Helical" evidence="1">
    <location>
        <begin position="2"/>
        <end position="22"/>
    </location>
</feature>
<feature type="transmembrane region" description="Helical" evidence="1">
    <location>
        <begin position="85"/>
        <end position="105"/>
    </location>
</feature>
<feature type="transmembrane region" description="Helical" evidence="1">
    <location>
        <begin position="119"/>
        <end position="139"/>
    </location>
</feature>
<feature type="transmembrane region" description="Helical" evidence="1">
    <location>
        <begin position="158"/>
        <end position="178"/>
    </location>
</feature>
<evidence type="ECO:0000255" key="1">
    <source>
        <dbReference type="HAMAP-Rule" id="MF_01043"/>
    </source>
</evidence>